<proteinExistence type="inferred from homology"/>
<evidence type="ECO:0000255" key="1">
    <source>
        <dbReference type="HAMAP-Rule" id="MF_00191"/>
    </source>
</evidence>
<gene>
    <name evidence="1" type="primary">ispH</name>
    <name type="ordered locus">Tlet_1650</name>
</gene>
<sequence length="278" mass="31476">MRIIVAEDIGFCSGVRRALKMTLSEINENEKIYTLGEIVHNKTVVDSLRKRGVNVLQENIIPEDAKNSSLIIRAHGISRDQLFELQKVFKKIVDTTCPIVHNLFQTASRIHQEGYRIVVFGKESHPEMSALKGYVKDATITLKPPELSGRICIMSQTTMSIDEFYDFVVKSISQSKFSEIRIINTVCEITARREKEAQKIAKQVDLMIIIGGKNSSNTSKLTKIASKFTRAIQIETPEEVDKINFDKVEMIGITTGTSTPEEDVKTVIDKIKCRRERK</sequence>
<protein>
    <recommendedName>
        <fullName evidence="1">4-hydroxy-3-methylbut-2-enyl diphosphate reductase</fullName>
        <shortName evidence="1">HMBPP reductase</shortName>
        <ecNumber evidence="1">1.17.7.4</ecNumber>
    </recommendedName>
</protein>
<accession>A8F7S0</accession>
<dbReference type="EC" id="1.17.7.4" evidence="1"/>
<dbReference type="EMBL" id="CP000812">
    <property type="protein sequence ID" value="ABV34204.1"/>
    <property type="molecule type" value="Genomic_DNA"/>
</dbReference>
<dbReference type="RefSeq" id="WP_012003680.1">
    <property type="nucleotide sequence ID" value="NZ_BSDV01000001.1"/>
</dbReference>
<dbReference type="SMR" id="A8F7S0"/>
<dbReference type="STRING" id="416591.Tlet_1650"/>
<dbReference type="KEGG" id="tle:Tlet_1650"/>
<dbReference type="eggNOG" id="COG0761">
    <property type="taxonomic scope" value="Bacteria"/>
</dbReference>
<dbReference type="HOGENOM" id="CLU_027486_0_1_0"/>
<dbReference type="OrthoDB" id="9777362at2"/>
<dbReference type="UniPathway" id="UPA00056">
    <property type="reaction ID" value="UER00097"/>
</dbReference>
<dbReference type="UniPathway" id="UPA00059">
    <property type="reaction ID" value="UER00105"/>
</dbReference>
<dbReference type="Proteomes" id="UP000002016">
    <property type="component" value="Chromosome"/>
</dbReference>
<dbReference type="GO" id="GO:0051539">
    <property type="term" value="F:4 iron, 4 sulfur cluster binding"/>
    <property type="evidence" value="ECO:0007669"/>
    <property type="project" value="UniProtKB-UniRule"/>
</dbReference>
<dbReference type="GO" id="GO:0051745">
    <property type="term" value="F:4-hydroxy-3-methylbut-2-enyl diphosphate reductase activity"/>
    <property type="evidence" value="ECO:0007669"/>
    <property type="project" value="UniProtKB-UniRule"/>
</dbReference>
<dbReference type="GO" id="GO:0046872">
    <property type="term" value="F:metal ion binding"/>
    <property type="evidence" value="ECO:0007669"/>
    <property type="project" value="UniProtKB-KW"/>
</dbReference>
<dbReference type="GO" id="GO:0050992">
    <property type="term" value="P:dimethylallyl diphosphate biosynthetic process"/>
    <property type="evidence" value="ECO:0007669"/>
    <property type="project" value="UniProtKB-UniRule"/>
</dbReference>
<dbReference type="GO" id="GO:0019288">
    <property type="term" value="P:isopentenyl diphosphate biosynthetic process, methylerythritol 4-phosphate pathway"/>
    <property type="evidence" value="ECO:0007669"/>
    <property type="project" value="UniProtKB-UniRule"/>
</dbReference>
<dbReference type="GO" id="GO:0016114">
    <property type="term" value="P:terpenoid biosynthetic process"/>
    <property type="evidence" value="ECO:0007669"/>
    <property type="project" value="UniProtKB-UniRule"/>
</dbReference>
<dbReference type="CDD" id="cd13944">
    <property type="entry name" value="lytB_ispH"/>
    <property type="match status" value="1"/>
</dbReference>
<dbReference type="Gene3D" id="3.40.50.11270">
    <property type="match status" value="1"/>
</dbReference>
<dbReference type="Gene3D" id="3.40.1010.20">
    <property type="entry name" value="4-hydroxy-3-methylbut-2-enyl diphosphate reductase, catalytic domain"/>
    <property type="match status" value="2"/>
</dbReference>
<dbReference type="HAMAP" id="MF_00191">
    <property type="entry name" value="IspH"/>
    <property type="match status" value="1"/>
</dbReference>
<dbReference type="InterPro" id="IPR003451">
    <property type="entry name" value="LytB/IspH"/>
</dbReference>
<dbReference type="NCBIfam" id="TIGR00216">
    <property type="entry name" value="ispH_lytB"/>
    <property type="match status" value="1"/>
</dbReference>
<dbReference type="PANTHER" id="PTHR30426">
    <property type="entry name" value="4-HYDROXY-3-METHYLBUT-2-ENYL DIPHOSPHATE REDUCTASE"/>
    <property type="match status" value="1"/>
</dbReference>
<dbReference type="PANTHER" id="PTHR30426:SF0">
    <property type="entry name" value="4-HYDROXY-3-METHYLBUT-2-ENYL DIPHOSPHATE REDUCTASE"/>
    <property type="match status" value="1"/>
</dbReference>
<dbReference type="Pfam" id="PF02401">
    <property type="entry name" value="LYTB"/>
    <property type="match status" value="1"/>
</dbReference>
<keyword id="KW-0004">4Fe-4S</keyword>
<keyword id="KW-0408">Iron</keyword>
<keyword id="KW-0411">Iron-sulfur</keyword>
<keyword id="KW-0414">Isoprene biosynthesis</keyword>
<keyword id="KW-0479">Metal-binding</keyword>
<keyword id="KW-0560">Oxidoreductase</keyword>
<keyword id="KW-1185">Reference proteome</keyword>
<comment type="function">
    <text evidence="1">Catalyzes the conversion of 1-hydroxy-2-methyl-2-(E)-butenyl 4-diphosphate (HMBPP) into a mixture of isopentenyl diphosphate (IPP) and dimethylallyl diphosphate (DMAPP). Acts in the terminal step of the DOXP/MEP pathway for isoprenoid precursor biosynthesis.</text>
</comment>
<comment type="catalytic activity">
    <reaction evidence="1">
        <text>isopentenyl diphosphate + 2 oxidized [2Fe-2S]-[ferredoxin] + H2O = (2E)-4-hydroxy-3-methylbut-2-enyl diphosphate + 2 reduced [2Fe-2S]-[ferredoxin] + 2 H(+)</text>
        <dbReference type="Rhea" id="RHEA:24488"/>
        <dbReference type="Rhea" id="RHEA-COMP:10000"/>
        <dbReference type="Rhea" id="RHEA-COMP:10001"/>
        <dbReference type="ChEBI" id="CHEBI:15377"/>
        <dbReference type="ChEBI" id="CHEBI:15378"/>
        <dbReference type="ChEBI" id="CHEBI:33737"/>
        <dbReference type="ChEBI" id="CHEBI:33738"/>
        <dbReference type="ChEBI" id="CHEBI:128753"/>
        <dbReference type="ChEBI" id="CHEBI:128769"/>
        <dbReference type="EC" id="1.17.7.4"/>
    </reaction>
</comment>
<comment type="catalytic activity">
    <reaction evidence="1">
        <text>dimethylallyl diphosphate + 2 oxidized [2Fe-2S]-[ferredoxin] + H2O = (2E)-4-hydroxy-3-methylbut-2-enyl diphosphate + 2 reduced [2Fe-2S]-[ferredoxin] + 2 H(+)</text>
        <dbReference type="Rhea" id="RHEA:24825"/>
        <dbReference type="Rhea" id="RHEA-COMP:10000"/>
        <dbReference type="Rhea" id="RHEA-COMP:10001"/>
        <dbReference type="ChEBI" id="CHEBI:15377"/>
        <dbReference type="ChEBI" id="CHEBI:15378"/>
        <dbReference type="ChEBI" id="CHEBI:33737"/>
        <dbReference type="ChEBI" id="CHEBI:33738"/>
        <dbReference type="ChEBI" id="CHEBI:57623"/>
        <dbReference type="ChEBI" id="CHEBI:128753"/>
        <dbReference type="EC" id="1.17.7.4"/>
    </reaction>
</comment>
<comment type="cofactor">
    <cofactor evidence="1">
        <name>[4Fe-4S] cluster</name>
        <dbReference type="ChEBI" id="CHEBI:49883"/>
    </cofactor>
    <text evidence="1">Binds 1 [4Fe-4S] cluster per subunit.</text>
</comment>
<comment type="pathway">
    <text evidence="1">Isoprenoid biosynthesis; dimethylallyl diphosphate biosynthesis; dimethylallyl diphosphate from (2E)-4-hydroxy-3-methylbutenyl diphosphate: step 1/1.</text>
</comment>
<comment type="pathway">
    <text evidence="1">Isoprenoid biosynthesis; isopentenyl diphosphate biosynthesis via DXP pathway; isopentenyl diphosphate from 1-deoxy-D-xylulose 5-phosphate: step 6/6.</text>
</comment>
<comment type="similarity">
    <text evidence="1">Belongs to the IspH family.</text>
</comment>
<name>ISPH_PSELT</name>
<reference key="1">
    <citation type="submission" date="2007-08" db="EMBL/GenBank/DDBJ databases">
        <title>Complete sequence of Thermotoga lettingae TMO.</title>
        <authorList>
            <consortium name="US DOE Joint Genome Institute"/>
            <person name="Copeland A."/>
            <person name="Lucas S."/>
            <person name="Lapidus A."/>
            <person name="Barry K."/>
            <person name="Glavina del Rio T."/>
            <person name="Dalin E."/>
            <person name="Tice H."/>
            <person name="Pitluck S."/>
            <person name="Foster B."/>
            <person name="Bruce D."/>
            <person name="Schmutz J."/>
            <person name="Larimer F."/>
            <person name="Land M."/>
            <person name="Hauser L."/>
            <person name="Kyrpides N."/>
            <person name="Mikhailova N."/>
            <person name="Nelson K."/>
            <person name="Gogarten J.P."/>
            <person name="Noll K."/>
            <person name="Richardson P."/>
        </authorList>
    </citation>
    <scope>NUCLEOTIDE SEQUENCE [LARGE SCALE GENOMIC DNA]</scope>
    <source>
        <strain>ATCC BAA-301 / DSM 14385 / NBRC 107922 / TMO</strain>
    </source>
</reference>
<feature type="chain" id="PRO_1000058511" description="4-hydroxy-3-methylbut-2-enyl diphosphate reductase">
    <location>
        <begin position="1"/>
        <end position="278"/>
    </location>
</feature>
<feature type="active site" description="Proton donor" evidence="1">
    <location>
        <position position="127"/>
    </location>
</feature>
<feature type="binding site" evidence="1">
    <location>
        <position position="12"/>
    </location>
    <ligand>
        <name>[4Fe-4S] cluster</name>
        <dbReference type="ChEBI" id="CHEBI:49883"/>
    </ligand>
</feature>
<feature type="binding site" evidence="1">
    <location>
        <position position="40"/>
    </location>
    <ligand>
        <name>(2E)-4-hydroxy-3-methylbut-2-enyl diphosphate</name>
        <dbReference type="ChEBI" id="CHEBI:128753"/>
    </ligand>
</feature>
<feature type="binding site" evidence="1">
    <location>
        <position position="40"/>
    </location>
    <ligand>
        <name>dimethylallyl diphosphate</name>
        <dbReference type="ChEBI" id="CHEBI:57623"/>
    </ligand>
</feature>
<feature type="binding site" evidence="1">
    <location>
        <position position="40"/>
    </location>
    <ligand>
        <name>isopentenyl diphosphate</name>
        <dbReference type="ChEBI" id="CHEBI:128769"/>
    </ligand>
</feature>
<feature type="binding site" evidence="1">
    <location>
        <position position="75"/>
    </location>
    <ligand>
        <name>(2E)-4-hydroxy-3-methylbut-2-enyl diphosphate</name>
        <dbReference type="ChEBI" id="CHEBI:128753"/>
    </ligand>
</feature>
<feature type="binding site" evidence="1">
    <location>
        <position position="75"/>
    </location>
    <ligand>
        <name>dimethylallyl diphosphate</name>
        <dbReference type="ChEBI" id="CHEBI:57623"/>
    </ligand>
</feature>
<feature type="binding site" evidence="1">
    <location>
        <position position="75"/>
    </location>
    <ligand>
        <name>isopentenyl diphosphate</name>
        <dbReference type="ChEBI" id="CHEBI:128769"/>
    </ligand>
</feature>
<feature type="binding site" evidence="1">
    <location>
        <position position="97"/>
    </location>
    <ligand>
        <name>[4Fe-4S] cluster</name>
        <dbReference type="ChEBI" id="CHEBI:49883"/>
    </ligand>
</feature>
<feature type="binding site" evidence="1">
    <location>
        <position position="125"/>
    </location>
    <ligand>
        <name>(2E)-4-hydroxy-3-methylbut-2-enyl diphosphate</name>
        <dbReference type="ChEBI" id="CHEBI:128753"/>
    </ligand>
</feature>
<feature type="binding site" evidence="1">
    <location>
        <position position="125"/>
    </location>
    <ligand>
        <name>dimethylallyl diphosphate</name>
        <dbReference type="ChEBI" id="CHEBI:57623"/>
    </ligand>
</feature>
<feature type="binding site" evidence="1">
    <location>
        <position position="125"/>
    </location>
    <ligand>
        <name>isopentenyl diphosphate</name>
        <dbReference type="ChEBI" id="CHEBI:128769"/>
    </ligand>
</feature>
<feature type="binding site" evidence="1">
    <location>
        <position position="157"/>
    </location>
    <ligand>
        <name>(2E)-4-hydroxy-3-methylbut-2-enyl diphosphate</name>
        <dbReference type="ChEBI" id="CHEBI:128753"/>
    </ligand>
</feature>
<feature type="binding site" evidence="1">
    <location>
        <position position="187"/>
    </location>
    <ligand>
        <name>[4Fe-4S] cluster</name>
        <dbReference type="ChEBI" id="CHEBI:49883"/>
    </ligand>
</feature>
<feature type="binding site" evidence="1">
    <location>
        <position position="215"/>
    </location>
    <ligand>
        <name>(2E)-4-hydroxy-3-methylbut-2-enyl diphosphate</name>
        <dbReference type="ChEBI" id="CHEBI:128753"/>
    </ligand>
</feature>
<feature type="binding site" evidence="1">
    <location>
        <position position="215"/>
    </location>
    <ligand>
        <name>dimethylallyl diphosphate</name>
        <dbReference type="ChEBI" id="CHEBI:57623"/>
    </ligand>
</feature>
<feature type="binding site" evidence="1">
    <location>
        <position position="215"/>
    </location>
    <ligand>
        <name>isopentenyl diphosphate</name>
        <dbReference type="ChEBI" id="CHEBI:128769"/>
    </ligand>
</feature>
<feature type="binding site" evidence="1">
    <location>
        <position position="216"/>
    </location>
    <ligand>
        <name>(2E)-4-hydroxy-3-methylbut-2-enyl diphosphate</name>
        <dbReference type="ChEBI" id="CHEBI:128753"/>
    </ligand>
</feature>
<feature type="binding site" evidence="1">
    <location>
        <position position="216"/>
    </location>
    <ligand>
        <name>dimethylallyl diphosphate</name>
        <dbReference type="ChEBI" id="CHEBI:57623"/>
    </ligand>
</feature>
<feature type="binding site" evidence="1">
    <location>
        <position position="216"/>
    </location>
    <ligand>
        <name>isopentenyl diphosphate</name>
        <dbReference type="ChEBI" id="CHEBI:128769"/>
    </ligand>
</feature>
<feature type="binding site" evidence="1">
    <location>
        <position position="217"/>
    </location>
    <ligand>
        <name>(2E)-4-hydroxy-3-methylbut-2-enyl diphosphate</name>
        <dbReference type="ChEBI" id="CHEBI:128753"/>
    </ligand>
</feature>
<feature type="binding site" evidence="1">
    <location>
        <position position="217"/>
    </location>
    <ligand>
        <name>dimethylallyl diphosphate</name>
        <dbReference type="ChEBI" id="CHEBI:57623"/>
    </ligand>
</feature>
<feature type="binding site" evidence="1">
    <location>
        <position position="217"/>
    </location>
    <ligand>
        <name>isopentenyl diphosphate</name>
        <dbReference type="ChEBI" id="CHEBI:128769"/>
    </ligand>
</feature>
<feature type="binding site" evidence="1">
    <location>
        <position position="258"/>
    </location>
    <ligand>
        <name>(2E)-4-hydroxy-3-methylbut-2-enyl diphosphate</name>
        <dbReference type="ChEBI" id="CHEBI:128753"/>
    </ligand>
</feature>
<feature type="binding site" evidence="1">
    <location>
        <position position="258"/>
    </location>
    <ligand>
        <name>dimethylallyl diphosphate</name>
        <dbReference type="ChEBI" id="CHEBI:57623"/>
    </ligand>
</feature>
<feature type="binding site" evidence="1">
    <location>
        <position position="258"/>
    </location>
    <ligand>
        <name>isopentenyl diphosphate</name>
        <dbReference type="ChEBI" id="CHEBI:128769"/>
    </ligand>
</feature>
<organism>
    <name type="scientific">Pseudothermotoga lettingae (strain ATCC BAA-301 / DSM 14385 / NBRC 107922 / TMO)</name>
    <name type="common">Thermotoga lettingae</name>
    <dbReference type="NCBI Taxonomy" id="416591"/>
    <lineage>
        <taxon>Bacteria</taxon>
        <taxon>Thermotogati</taxon>
        <taxon>Thermotogota</taxon>
        <taxon>Thermotogae</taxon>
        <taxon>Thermotogales</taxon>
        <taxon>Thermotogaceae</taxon>
        <taxon>Pseudothermotoga</taxon>
    </lineage>
</organism>